<organism>
    <name type="scientific">Pseudomonas putida (strain ATCC 47054 / DSM 6125 / CFBP 8728 / NCIMB 11950 / KT2440)</name>
    <dbReference type="NCBI Taxonomy" id="160488"/>
    <lineage>
        <taxon>Bacteria</taxon>
        <taxon>Pseudomonadati</taxon>
        <taxon>Pseudomonadota</taxon>
        <taxon>Gammaproteobacteria</taxon>
        <taxon>Pseudomonadales</taxon>
        <taxon>Pseudomonadaceae</taxon>
        <taxon>Pseudomonas</taxon>
    </lineage>
</organism>
<reference key="1">
    <citation type="journal article" date="2002" name="Environ. Microbiol.">
        <title>Complete genome sequence and comparative analysis of the metabolically versatile Pseudomonas putida KT2440.</title>
        <authorList>
            <person name="Nelson K.E."/>
            <person name="Weinel C."/>
            <person name="Paulsen I.T."/>
            <person name="Dodson R.J."/>
            <person name="Hilbert H."/>
            <person name="Martins dos Santos V.A.P."/>
            <person name="Fouts D.E."/>
            <person name="Gill S.R."/>
            <person name="Pop M."/>
            <person name="Holmes M."/>
            <person name="Brinkac L.M."/>
            <person name="Beanan M.J."/>
            <person name="DeBoy R.T."/>
            <person name="Daugherty S.C."/>
            <person name="Kolonay J.F."/>
            <person name="Madupu R."/>
            <person name="Nelson W.C."/>
            <person name="White O."/>
            <person name="Peterson J.D."/>
            <person name="Khouri H.M."/>
            <person name="Hance I."/>
            <person name="Chris Lee P."/>
            <person name="Holtzapple E.K."/>
            <person name="Scanlan D."/>
            <person name="Tran K."/>
            <person name="Moazzez A."/>
            <person name="Utterback T.R."/>
            <person name="Rizzo M."/>
            <person name="Lee K."/>
            <person name="Kosack D."/>
            <person name="Moestl D."/>
            <person name="Wedler H."/>
            <person name="Lauber J."/>
            <person name="Stjepandic D."/>
            <person name="Hoheisel J."/>
            <person name="Straetz M."/>
            <person name="Heim S."/>
            <person name="Kiewitz C."/>
            <person name="Eisen J.A."/>
            <person name="Timmis K.N."/>
            <person name="Duesterhoeft A."/>
            <person name="Tuemmler B."/>
            <person name="Fraser C.M."/>
        </authorList>
    </citation>
    <scope>NUCLEOTIDE SEQUENCE [LARGE SCALE GENOMIC DNA]</scope>
    <source>
        <strain>ATCC 47054 / DSM 6125 / CFBP 8728 / NCIMB 11950 / KT2440</strain>
    </source>
</reference>
<accession>Q88D35</accession>
<evidence type="ECO:0000250" key="1"/>
<evidence type="ECO:0000255" key="2">
    <source>
        <dbReference type="HAMAP-Rule" id="MF_00162"/>
    </source>
</evidence>
<comment type="catalytic activity">
    <reaction evidence="2">
        <text>gamma-L-glutamyl-L-cysteine + glycine + ATP = glutathione + ADP + phosphate + H(+)</text>
        <dbReference type="Rhea" id="RHEA:13557"/>
        <dbReference type="ChEBI" id="CHEBI:15378"/>
        <dbReference type="ChEBI" id="CHEBI:30616"/>
        <dbReference type="ChEBI" id="CHEBI:43474"/>
        <dbReference type="ChEBI" id="CHEBI:57305"/>
        <dbReference type="ChEBI" id="CHEBI:57925"/>
        <dbReference type="ChEBI" id="CHEBI:58173"/>
        <dbReference type="ChEBI" id="CHEBI:456216"/>
        <dbReference type="EC" id="6.3.2.3"/>
    </reaction>
</comment>
<comment type="cofactor">
    <cofactor evidence="1">
        <name>Mg(2+)</name>
        <dbReference type="ChEBI" id="CHEBI:18420"/>
    </cofactor>
    <cofactor evidence="1">
        <name>Mn(2+)</name>
        <dbReference type="ChEBI" id="CHEBI:29035"/>
    </cofactor>
    <text evidence="1">Binds 1 Mg(2+) or Mn(2+) ion per subunit.</text>
</comment>
<comment type="pathway">
    <text evidence="2">Sulfur metabolism; glutathione biosynthesis; glutathione from L-cysteine and L-glutamate: step 2/2.</text>
</comment>
<comment type="similarity">
    <text evidence="2">Belongs to the prokaryotic GSH synthase family.</text>
</comment>
<proteinExistence type="inferred from homology"/>
<protein>
    <recommendedName>
        <fullName evidence="2">Glutathione synthetase</fullName>
        <ecNumber evidence="2">6.3.2.3</ecNumber>
    </recommendedName>
    <alternativeName>
        <fullName evidence="2">GSH synthetase</fullName>
        <shortName evidence="2">GSH-S</shortName>
        <shortName evidence="2">GSHase</shortName>
    </alternativeName>
    <alternativeName>
        <fullName evidence="2">Glutathione synthase</fullName>
    </alternativeName>
</protein>
<sequence>MSVRLGIVMDPIASISYKKDSSLAMLLAAQARGWSLFYMEQQDLYQGEGKARARMRPLKVFADPARWFELGEEQDSPLAELDVILMRKDPPFDMEFVYSTYLLEQAENDGVLVVNRPQSLRDCNEKMFATLFPQCTTPTLVSRRPDIIREFTAKHADVILKPLDGMGGTSIFRHRAGDPNLSVILETLTALGTQQIMAQAYLPAIKDGDKRILMIDGEPVDYCLARIPASGETRGNLAAGGRGEARPLTERDRWIAAQVGPTLREKGLLFVGLDVIGDYLTEINVTSPTCIREIDAAYNTDIGGKLMDAIDRKLKAR</sequence>
<gene>
    <name evidence="2" type="primary">gshB</name>
    <name type="ordered locus">PP_4993</name>
</gene>
<name>GSHB_PSEPK</name>
<dbReference type="EC" id="6.3.2.3" evidence="2"/>
<dbReference type="EMBL" id="AE015451">
    <property type="protein sequence ID" value="AAN70559.1"/>
    <property type="molecule type" value="Genomic_DNA"/>
</dbReference>
<dbReference type="RefSeq" id="NP_747095.1">
    <property type="nucleotide sequence ID" value="NC_002947.4"/>
</dbReference>
<dbReference type="RefSeq" id="WP_010955561.1">
    <property type="nucleotide sequence ID" value="NZ_CP169744.1"/>
</dbReference>
<dbReference type="SMR" id="Q88D35"/>
<dbReference type="STRING" id="160488.PP_4993"/>
<dbReference type="PaxDb" id="160488-PP_4993"/>
<dbReference type="GeneID" id="83682727"/>
<dbReference type="KEGG" id="ppu:PP_4993"/>
<dbReference type="PATRIC" id="fig|160488.4.peg.5334"/>
<dbReference type="eggNOG" id="COG0189">
    <property type="taxonomic scope" value="Bacteria"/>
</dbReference>
<dbReference type="HOGENOM" id="CLU_068239_0_0_6"/>
<dbReference type="OrthoDB" id="9785415at2"/>
<dbReference type="PhylomeDB" id="Q88D35"/>
<dbReference type="BioCyc" id="PPUT160488:G1G01-5338-MONOMER"/>
<dbReference type="UniPathway" id="UPA00142">
    <property type="reaction ID" value="UER00210"/>
</dbReference>
<dbReference type="Proteomes" id="UP000000556">
    <property type="component" value="Chromosome"/>
</dbReference>
<dbReference type="GO" id="GO:0005737">
    <property type="term" value="C:cytoplasm"/>
    <property type="evidence" value="ECO:0007669"/>
    <property type="project" value="TreeGrafter"/>
</dbReference>
<dbReference type="GO" id="GO:0005524">
    <property type="term" value="F:ATP binding"/>
    <property type="evidence" value="ECO:0007669"/>
    <property type="project" value="UniProtKB-UniRule"/>
</dbReference>
<dbReference type="GO" id="GO:0004363">
    <property type="term" value="F:glutathione synthase activity"/>
    <property type="evidence" value="ECO:0007669"/>
    <property type="project" value="UniProtKB-UniRule"/>
</dbReference>
<dbReference type="GO" id="GO:0046872">
    <property type="term" value="F:metal ion binding"/>
    <property type="evidence" value="ECO:0007669"/>
    <property type="project" value="UniProtKB-KW"/>
</dbReference>
<dbReference type="FunFam" id="3.30.1490.20:FF:000009">
    <property type="entry name" value="Glutathione synthetase"/>
    <property type="match status" value="1"/>
</dbReference>
<dbReference type="FunFam" id="3.30.470.20:FF:000010">
    <property type="entry name" value="Glutathione synthetase"/>
    <property type="match status" value="1"/>
</dbReference>
<dbReference type="FunFam" id="3.40.50.20:FF:000009">
    <property type="entry name" value="Glutathione synthetase"/>
    <property type="match status" value="1"/>
</dbReference>
<dbReference type="Gene3D" id="3.40.50.20">
    <property type="match status" value="1"/>
</dbReference>
<dbReference type="Gene3D" id="3.30.1490.20">
    <property type="entry name" value="ATP-grasp fold, A domain"/>
    <property type="match status" value="1"/>
</dbReference>
<dbReference type="Gene3D" id="3.30.470.20">
    <property type="entry name" value="ATP-grasp fold, B domain"/>
    <property type="match status" value="1"/>
</dbReference>
<dbReference type="HAMAP" id="MF_00162">
    <property type="entry name" value="GSH_S"/>
    <property type="match status" value="1"/>
</dbReference>
<dbReference type="InterPro" id="IPR011761">
    <property type="entry name" value="ATP-grasp"/>
</dbReference>
<dbReference type="InterPro" id="IPR013815">
    <property type="entry name" value="ATP_grasp_subdomain_1"/>
</dbReference>
<dbReference type="InterPro" id="IPR006284">
    <property type="entry name" value="Glut_synth_pro"/>
</dbReference>
<dbReference type="InterPro" id="IPR004218">
    <property type="entry name" value="GSHS_ATP-bd"/>
</dbReference>
<dbReference type="InterPro" id="IPR004215">
    <property type="entry name" value="GSHS_N"/>
</dbReference>
<dbReference type="InterPro" id="IPR016185">
    <property type="entry name" value="PreATP-grasp_dom_sf"/>
</dbReference>
<dbReference type="NCBIfam" id="TIGR01380">
    <property type="entry name" value="glut_syn"/>
    <property type="match status" value="1"/>
</dbReference>
<dbReference type="NCBIfam" id="NF003573">
    <property type="entry name" value="PRK05246.1"/>
    <property type="match status" value="1"/>
</dbReference>
<dbReference type="PANTHER" id="PTHR21621:SF4">
    <property type="entry name" value="GLUTATHIONE SYNTHETASE"/>
    <property type="match status" value="1"/>
</dbReference>
<dbReference type="PANTHER" id="PTHR21621">
    <property type="entry name" value="RIBOSOMAL PROTEIN S6 MODIFICATION PROTEIN"/>
    <property type="match status" value="1"/>
</dbReference>
<dbReference type="Pfam" id="PF02955">
    <property type="entry name" value="GSH-S_ATP"/>
    <property type="match status" value="1"/>
</dbReference>
<dbReference type="Pfam" id="PF02951">
    <property type="entry name" value="GSH-S_N"/>
    <property type="match status" value="1"/>
</dbReference>
<dbReference type="SUPFAM" id="SSF56059">
    <property type="entry name" value="Glutathione synthetase ATP-binding domain-like"/>
    <property type="match status" value="1"/>
</dbReference>
<dbReference type="SUPFAM" id="SSF52440">
    <property type="entry name" value="PreATP-grasp domain"/>
    <property type="match status" value="1"/>
</dbReference>
<dbReference type="PROSITE" id="PS50975">
    <property type="entry name" value="ATP_GRASP"/>
    <property type="match status" value="1"/>
</dbReference>
<feature type="chain" id="PRO_0000197477" description="Glutathione synthetase">
    <location>
        <begin position="1"/>
        <end position="317"/>
    </location>
</feature>
<feature type="domain" description="ATP-grasp" evidence="2">
    <location>
        <begin position="125"/>
        <end position="311"/>
    </location>
</feature>
<feature type="binding site" evidence="2">
    <location>
        <begin position="152"/>
        <end position="208"/>
    </location>
    <ligand>
        <name>ATP</name>
        <dbReference type="ChEBI" id="CHEBI:30616"/>
    </ligand>
</feature>
<feature type="binding site" evidence="2">
    <location>
        <position position="282"/>
    </location>
    <ligand>
        <name>Mg(2+)</name>
        <dbReference type="ChEBI" id="CHEBI:18420"/>
    </ligand>
</feature>
<feature type="binding site" evidence="2">
    <location>
        <position position="284"/>
    </location>
    <ligand>
        <name>Mg(2+)</name>
        <dbReference type="ChEBI" id="CHEBI:18420"/>
    </ligand>
</feature>
<keyword id="KW-0067">ATP-binding</keyword>
<keyword id="KW-0317">Glutathione biosynthesis</keyword>
<keyword id="KW-0436">Ligase</keyword>
<keyword id="KW-0460">Magnesium</keyword>
<keyword id="KW-0464">Manganese</keyword>
<keyword id="KW-0479">Metal-binding</keyword>
<keyword id="KW-0547">Nucleotide-binding</keyword>
<keyword id="KW-1185">Reference proteome</keyword>